<reference key="1">
    <citation type="journal article" date="2002" name="DNA Res.">
        <title>Complete genomic sequence of nitrogen-fixing symbiotic bacterium Bradyrhizobium japonicum USDA110.</title>
        <authorList>
            <person name="Kaneko T."/>
            <person name="Nakamura Y."/>
            <person name="Sato S."/>
            <person name="Minamisawa K."/>
            <person name="Uchiumi T."/>
            <person name="Sasamoto S."/>
            <person name="Watanabe A."/>
            <person name="Idesawa K."/>
            <person name="Iriguchi M."/>
            <person name="Kawashima K."/>
            <person name="Kohara M."/>
            <person name="Matsumoto M."/>
            <person name="Shimpo S."/>
            <person name="Tsuruoka H."/>
            <person name="Wada T."/>
            <person name="Yamada M."/>
            <person name="Tabata S."/>
        </authorList>
    </citation>
    <scope>NUCLEOTIDE SEQUENCE [LARGE SCALE GENOMIC DNA]</scope>
    <source>
        <strain>JCM 10833 / BCRC 13528 / IAM 13628 / NBRC 14792 / USDA 110</strain>
    </source>
</reference>
<comment type="function">
    <text evidence="1">One of the primary rRNA binding proteins, it binds directly near the 3'-end of the 23S rRNA, where it nucleates assembly of the 50S subunit.</text>
</comment>
<comment type="subunit">
    <text evidence="1">Part of the 50S ribosomal subunit. Forms a cluster with proteins L14 and L19.</text>
</comment>
<comment type="PTM">
    <text evidence="1">Methylated by PrmB.</text>
</comment>
<comment type="similarity">
    <text evidence="1">Belongs to the universal ribosomal protein uL3 family.</text>
</comment>
<keyword id="KW-0488">Methylation</keyword>
<keyword id="KW-1185">Reference proteome</keyword>
<keyword id="KW-0687">Ribonucleoprotein</keyword>
<keyword id="KW-0689">Ribosomal protein</keyword>
<keyword id="KW-0694">RNA-binding</keyword>
<keyword id="KW-0699">rRNA-binding</keyword>
<accession>Q89J84</accession>
<evidence type="ECO:0000255" key="1">
    <source>
        <dbReference type="HAMAP-Rule" id="MF_01325"/>
    </source>
</evidence>
<evidence type="ECO:0000256" key="2">
    <source>
        <dbReference type="SAM" id="MobiDB-lite"/>
    </source>
</evidence>
<evidence type="ECO:0000305" key="3"/>
<protein>
    <recommendedName>
        <fullName evidence="1">Large ribosomal subunit protein uL3</fullName>
    </recommendedName>
    <alternativeName>
        <fullName evidence="3">50S ribosomal protein L3</fullName>
    </alternativeName>
</protein>
<feature type="chain" id="PRO_0000077073" description="Large ribosomal subunit protein uL3">
    <location>
        <begin position="1"/>
        <end position="238"/>
    </location>
</feature>
<feature type="region of interest" description="Disordered" evidence="2">
    <location>
        <begin position="140"/>
        <end position="164"/>
    </location>
</feature>
<feature type="region of interest" description="Disordered" evidence="2">
    <location>
        <begin position="212"/>
        <end position="238"/>
    </location>
</feature>
<feature type="compositionally biased region" description="Low complexity" evidence="2">
    <location>
        <begin position="225"/>
        <end position="238"/>
    </location>
</feature>
<feature type="modified residue" description="N5-methylglutamine" evidence="1">
    <location>
        <position position="151"/>
    </location>
</feature>
<name>RL3_BRADU</name>
<sequence>MRSGVIAQKVGMTRVFTEAGEHIPVTVLKLGNCQVVGHRTEEKNGYVALQLGSGSRKTVYMPKAERGQFAVAKVEPKRRVEEFRVTADAMIPVGAEIQADHFVVGQFVDVTGTSVGKGFAGGMKRWNFGGLRATHGVSISHRSIGSTGGRQDPGKTWKNKKMPGHMGVDRITTLNLRVVQLDVERGLILVEGAVPGSKGGWIRVRDAVKKPLPKEAPKPGKFKVAGGEAEAAAQQEGA</sequence>
<proteinExistence type="inferred from homology"/>
<gene>
    <name evidence="1" type="primary">rplC</name>
    <name type="ordered locus">bll5400</name>
</gene>
<organism>
    <name type="scientific">Bradyrhizobium diazoefficiens (strain JCM 10833 / BCRC 13528 / IAM 13628 / NBRC 14792 / USDA 110)</name>
    <dbReference type="NCBI Taxonomy" id="224911"/>
    <lineage>
        <taxon>Bacteria</taxon>
        <taxon>Pseudomonadati</taxon>
        <taxon>Pseudomonadota</taxon>
        <taxon>Alphaproteobacteria</taxon>
        <taxon>Hyphomicrobiales</taxon>
        <taxon>Nitrobacteraceae</taxon>
        <taxon>Bradyrhizobium</taxon>
    </lineage>
</organism>
<dbReference type="EMBL" id="BA000040">
    <property type="protein sequence ID" value="BAC50665.1"/>
    <property type="molecule type" value="Genomic_DNA"/>
</dbReference>
<dbReference type="RefSeq" id="NP_772040.1">
    <property type="nucleotide sequence ID" value="NC_004463.1"/>
</dbReference>
<dbReference type="RefSeq" id="WP_011088151.1">
    <property type="nucleotide sequence ID" value="NC_004463.1"/>
</dbReference>
<dbReference type="SMR" id="Q89J84"/>
<dbReference type="FunCoup" id="Q89J84">
    <property type="interactions" value="896"/>
</dbReference>
<dbReference type="STRING" id="224911.AAV28_24410"/>
<dbReference type="EnsemblBacteria" id="BAC50665">
    <property type="protein sequence ID" value="BAC50665"/>
    <property type="gene ID" value="BAC50665"/>
</dbReference>
<dbReference type="GeneID" id="46492398"/>
<dbReference type="KEGG" id="bja:bll5400"/>
<dbReference type="PATRIC" id="fig|224911.44.peg.5299"/>
<dbReference type="eggNOG" id="COG0087">
    <property type="taxonomic scope" value="Bacteria"/>
</dbReference>
<dbReference type="HOGENOM" id="CLU_044142_2_0_5"/>
<dbReference type="InParanoid" id="Q89J84"/>
<dbReference type="OrthoDB" id="9806135at2"/>
<dbReference type="PhylomeDB" id="Q89J84"/>
<dbReference type="Proteomes" id="UP000002526">
    <property type="component" value="Chromosome"/>
</dbReference>
<dbReference type="GO" id="GO:0022625">
    <property type="term" value="C:cytosolic large ribosomal subunit"/>
    <property type="evidence" value="ECO:0000318"/>
    <property type="project" value="GO_Central"/>
</dbReference>
<dbReference type="GO" id="GO:0019843">
    <property type="term" value="F:rRNA binding"/>
    <property type="evidence" value="ECO:0007669"/>
    <property type="project" value="UniProtKB-UniRule"/>
</dbReference>
<dbReference type="GO" id="GO:0003735">
    <property type="term" value="F:structural constituent of ribosome"/>
    <property type="evidence" value="ECO:0000318"/>
    <property type="project" value="GO_Central"/>
</dbReference>
<dbReference type="GO" id="GO:0006412">
    <property type="term" value="P:translation"/>
    <property type="evidence" value="ECO:0007669"/>
    <property type="project" value="UniProtKB-UniRule"/>
</dbReference>
<dbReference type="FunFam" id="2.40.30.10:FF:000004">
    <property type="entry name" value="50S ribosomal protein L3"/>
    <property type="match status" value="1"/>
</dbReference>
<dbReference type="FunFam" id="3.30.160.810:FF:000001">
    <property type="entry name" value="50S ribosomal protein L3"/>
    <property type="match status" value="1"/>
</dbReference>
<dbReference type="Gene3D" id="3.30.160.810">
    <property type="match status" value="1"/>
</dbReference>
<dbReference type="Gene3D" id="2.40.30.10">
    <property type="entry name" value="Translation factors"/>
    <property type="match status" value="1"/>
</dbReference>
<dbReference type="HAMAP" id="MF_01325_B">
    <property type="entry name" value="Ribosomal_uL3_B"/>
    <property type="match status" value="1"/>
</dbReference>
<dbReference type="InterPro" id="IPR000597">
    <property type="entry name" value="Ribosomal_uL3"/>
</dbReference>
<dbReference type="InterPro" id="IPR019927">
    <property type="entry name" value="Ribosomal_uL3_bac/org-type"/>
</dbReference>
<dbReference type="InterPro" id="IPR019926">
    <property type="entry name" value="Ribosomal_uL3_CS"/>
</dbReference>
<dbReference type="InterPro" id="IPR009000">
    <property type="entry name" value="Transl_B-barrel_sf"/>
</dbReference>
<dbReference type="NCBIfam" id="TIGR03625">
    <property type="entry name" value="L3_bact"/>
    <property type="match status" value="1"/>
</dbReference>
<dbReference type="PANTHER" id="PTHR11229">
    <property type="entry name" value="50S RIBOSOMAL PROTEIN L3"/>
    <property type="match status" value="1"/>
</dbReference>
<dbReference type="PANTHER" id="PTHR11229:SF16">
    <property type="entry name" value="LARGE RIBOSOMAL SUBUNIT PROTEIN UL3C"/>
    <property type="match status" value="1"/>
</dbReference>
<dbReference type="Pfam" id="PF00297">
    <property type="entry name" value="Ribosomal_L3"/>
    <property type="match status" value="1"/>
</dbReference>
<dbReference type="SUPFAM" id="SSF50447">
    <property type="entry name" value="Translation proteins"/>
    <property type="match status" value="1"/>
</dbReference>
<dbReference type="PROSITE" id="PS00474">
    <property type="entry name" value="RIBOSOMAL_L3"/>
    <property type="match status" value="1"/>
</dbReference>